<dbReference type="EC" id="6.1.1.9" evidence="1"/>
<dbReference type="EMBL" id="CP000013">
    <property type="protein sequence ID" value="AAU07585.1"/>
    <property type="molecule type" value="Genomic_DNA"/>
</dbReference>
<dbReference type="RefSeq" id="WP_011194033.1">
    <property type="nucleotide sequence ID" value="NZ_CP028872.1"/>
</dbReference>
<dbReference type="SMR" id="Q660D6"/>
<dbReference type="GeneID" id="45161535"/>
<dbReference type="KEGG" id="bga:BG0759"/>
<dbReference type="eggNOG" id="COG0525">
    <property type="taxonomic scope" value="Bacteria"/>
</dbReference>
<dbReference type="HOGENOM" id="CLU_001493_0_2_12"/>
<dbReference type="OrthoDB" id="9810365at2"/>
<dbReference type="Proteomes" id="UP000002276">
    <property type="component" value="Chromosome"/>
</dbReference>
<dbReference type="GO" id="GO:0005829">
    <property type="term" value="C:cytosol"/>
    <property type="evidence" value="ECO:0007669"/>
    <property type="project" value="TreeGrafter"/>
</dbReference>
<dbReference type="GO" id="GO:0002161">
    <property type="term" value="F:aminoacyl-tRNA deacylase activity"/>
    <property type="evidence" value="ECO:0007669"/>
    <property type="project" value="InterPro"/>
</dbReference>
<dbReference type="GO" id="GO:0005524">
    <property type="term" value="F:ATP binding"/>
    <property type="evidence" value="ECO:0007669"/>
    <property type="project" value="UniProtKB-UniRule"/>
</dbReference>
<dbReference type="GO" id="GO:0004832">
    <property type="term" value="F:valine-tRNA ligase activity"/>
    <property type="evidence" value="ECO:0007669"/>
    <property type="project" value="UniProtKB-UniRule"/>
</dbReference>
<dbReference type="GO" id="GO:0006438">
    <property type="term" value="P:valyl-tRNA aminoacylation"/>
    <property type="evidence" value="ECO:0007669"/>
    <property type="project" value="UniProtKB-UniRule"/>
</dbReference>
<dbReference type="CDD" id="cd07962">
    <property type="entry name" value="Anticodon_Ia_Val"/>
    <property type="match status" value="1"/>
</dbReference>
<dbReference type="CDD" id="cd00817">
    <property type="entry name" value="ValRS_core"/>
    <property type="match status" value="1"/>
</dbReference>
<dbReference type="FunFam" id="3.90.740.10:FF:000010">
    <property type="entry name" value="Valine--tRNA ligase"/>
    <property type="match status" value="1"/>
</dbReference>
<dbReference type="Gene3D" id="3.40.50.620">
    <property type="entry name" value="HUPs"/>
    <property type="match status" value="2"/>
</dbReference>
<dbReference type="Gene3D" id="1.10.730.10">
    <property type="entry name" value="Isoleucyl-tRNA Synthetase, Domain 1"/>
    <property type="match status" value="1"/>
</dbReference>
<dbReference type="Gene3D" id="1.10.287.380">
    <property type="entry name" value="Valyl-tRNA synthetase, C-terminal domain"/>
    <property type="match status" value="1"/>
</dbReference>
<dbReference type="HAMAP" id="MF_02004">
    <property type="entry name" value="Val_tRNA_synth_type1"/>
    <property type="match status" value="1"/>
</dbReference>
<dbReference type="InterPro" id="IPR001412">
    <property type="entry name" value="aa-tRNA-synth_I_CS"/>
</dbReference>
<dbReference type="InterPro" id="IPR002300">
    <property type="entry name" value="aa-tRNA-synth_Ia"/>
</dbReference>
<dbReference type="InterPro" id="IPR033705">
    <property type="entry name" value="Anticodon_Ia_Val"/>
</dbReference>
<dbReference type="InterPro" id="IPR013155">
    <property type="entry name" value="M/V/L/I-tRNA-synth_anticd-bd"/>
</dbReference>
<dbReference type="InterPro" id="IPR014729">
    <property type="entry name" value="Rossmann-like_a/b/a_fold"/>
</dbReference>
<dbReference type="InterPro" id="IPR010978">
    <property type="entry name" value="tRNA-bd_arm"/>
</dbReference>
<dbReference type="InterPro" id="IPR009080">
    <property type="entry name" value="tRNAsynth_Ia_anticodon-bd"/>
</dbReference>
<dbReference type="InterPro" id="IPR037118">
    <property type="entry name" value="Val-tRNA_synth_C_sf"/>
</dbReference>
<dbReference type="InterPro" id="IPR019499">
    <property type="entry name" value="Val-tRNA_synth_tRNA-bd"/>
</dbReference>
<dbReference type="InterPro" id="IPR009008">
    <property type="entry name" value="Val/Leu/Ile-tRNA-synth_edit"/>
</dbReference>
<dbReference type="InterPro" id="IPR002303">
    <property type="entry name" value="Valyl-tRNA_ligase"/>
</dbReference>
<dbReference type="NCBIfam" id="NF004349">
    <property type="entry name" value="PRK05729.1"/>
    <property type="match status" value="1"/>
</dbReference>
<dbReference type="NCBIfam" id="TIGR00422">
    <property type="entry name" value="valS"/>
    <property type="match status" value="1"/>
</dbReference>
<dbReference type="PANTHER" id="PTHR11946:SF93">
    <property type="entry name" value="VALINE--TRNA LIGASE, CHLOROPLASTIC_MITOCHONDRIAL 2"/>
    <property type="match status" value="1"/>
</dbReference>
<dbReference type="PANTHER" id="PTHR11946">
    <property type="entry name" value="VALYL-TRNA SYNTHETASES"/>
    <property type="match status" value="1"/>
</dbReference>
<dbReference type="Pfam" id="PF08264">
    <property type="entry name" value="Anticodon_1"/>
    <property type="match status" value="1"/>
</dbReference>
<dbReference type="Pfam" id="PF00133">
    <property type="entry name" value="tRNA-synt_1"/>
    <property type="match status" value="1"/>
</dbReference>
<dbReference type="Pfam" id="PF10458">
    <property type="entry name" value="Val_tRNA-synt_C"/>
    <property type="match status" value="1"/>
</dbReference>
<dbReference type="PRINTS" id="PR00986">
    <property type="entry name" value="TRNASYNTHVAL"/>
</dbReference>
<dbReference type="SUPFAM" id="SSF47323">
    <property type="entry name" value="Anticodon-binding domain of a subclass of class I aminoacyl-tRNA synthetases"/>
    <property type="match status" value="1"/>
</dbReference>
<dbReference type="SUPFAM" id="SSF52374">
    <property type="entry name" value="Nucleotidylyl transferase"/>
    <property type="match status" value="1"/>
</dbReference>
<dbReference type="SUPFAM" id="SSF46589">
    <property type="entry name" value="tRNA-binding arm"/>
    <property type="match status" value="1"/>
</dbReference>
<dbReference type="SUPFAM" id="SSF50677">
    <property type="entry name" value="ValRS/IleRS/LeuRS editing domain"/>
    <property type="match status" value="1"/>
</dbReference>
<dbReference type="PROSITE" id="PS00178">
    <property type="entry name" value="AA_TRNA_LIGASE_I"/>
    <property type="match status" value="1"/>
</dbReference>
<accession>Q660D6</accession>
<evidence type="ECO:0000255" key="1">
    <source>
        <dbReference type="HAMAP-Rule" id="MF_02004"/>
    </source>
</evidence>
<organism>
    <name type="scientific">Borrelia garinii subsp. bavariensis (strain ATCC BAA-2496 / DSM 23469 / PBi)</name>
    <name type="common">Borreliella bavariensis</name>
    <dbReference type="NCBI Taxonomy" id="290434"/>
    <lineage>
        <taxon>Bacteria</taxon>
        <taxon>Pseudomonadati</taxon>
        <taxon>Spirochaetota</taxon>
        <taxon>Spirochaetia</taxon>
        <taxon>Spirochaetales</taxon>
        <taxon>Borreliaceae</taxon>
        <taxon>Borreliella</taxon>
    </lineage>
</organism>
<protein>
    <recommendedName>
        <fullName evidence="1">Valine--tRNA ligase</fullName>
        <ecNumber evidence="1">6.1.1.9</ecNumber>
    </recommendedName>
    <alternativeName>
        <fullName evidence="1">Valyl-tRNA synthetase</fullName>
        <shortName evidence="1">ValRS</shortName>
    </alternativeName>
</protein>
<name>SYV_BORGP</name>
<proteinExistence type="inferred from homology"/>
<comment type="function">
    <text evidence="1">Catalyzes the attachment of valine to tRNA(Val). As ValRS can inadvertently accommodate and process structurally similar amino acids such as threonine, to avoid such errors, it has a 'posttransfer' editing activity that hydrolyzes mischarged Thr-tRNA(Val) in a tRNA-dependent manner.</text>
</comment>
<comment type="catalytic activity">
    <reaction evidence="1">
        <text>tRNA(Val) + L-valine + ATP = L-valyl-tRNA(Val) + AMP + diphosphate</text>
        <dbReference type="Rhea" id="RHEA:10704"/>
        <dbReference type="Rhea" id="RHEA-COMP:9672"/>
        <dbReference type="Rhea" id="RHEA-COMP:9708"/>
        <dbReference type="ChEBI" id="CHEBI:30616"/>
        <dbReference type="ChEBI" id="CHEBI:33019"/>
        <dbReference type="ChEBI" id="CHEBI:57762"/>
        <dbReference type="ChEBI" id="CHEBI:78442"/>
        <dbReference type="ChEBI" id="CHEBI:78537"/>
        <dbReference type="ChEBI" id="CHEBI:456215"/>
        <dbReference type="EC" id="6.1.1.9"/>
    </reaction>
</comment>
<comment type="subunit">
    <text evidence="1">Monomer.</text>
</comment>
<comment type="subcellular location">
    <subcellularLocation>
        <location evidence="1">Cytoplasm</location>
    </subcellularLocation>
</comment>
<comment type="domain">
    <text evidence="1">ValRS has two distinct active sites: one for aminoacylation and one for editing. The misactivated threonine is translocated from the active site to the editing site.</text>
</comment>
<comment type="domain">
    <text evidence="1">The C-terminal coiled-coil domain is crucial for aminoacylation activity.</text>
</comment>
<comment type="similarity">
    <text evidence="1">Belongs to the class-I aminoacyl-tRNA synthetase family. ValS type 1 subfamily.</text>
</comment>
<gene>
    <name evidence="1" type="primary">valS</name>
    <name type="ordered locus">BG0759</name>
</gene>
<reference key="1">
    <citation type="journal article" date="2004" name="Nucleic Acids Res.">
        <title>Comparative analysis of the Borrelia garinii genome.</title>
        <authorList>
            <person name="Gloeckner G."/>
            <person name="Lehmann R."/>
            <person name="Romualdi A."/>
            <person name="Pradella S."/>
            <person name="Schulte-Spechtel U."/>
            <person name="Schilhabel M."/>
            <person name="Wilske B."/>
            <person name="Suehnel J."/>
            <person name="Platzer M."/>
        </authorList>
    </citation>
    <scope>NUCLEOTIDE SEQUENCE [LARGE SCALE GENOMIC DNA]</scope>
    <source>
        <strain>ATCC BAA-2496 / DSM 23469 / PBi</strain>
    </source>
</reference>
<sequence length="875" mass="101703">MNFRLLEKYDPKAFEDEIYNKWLKNNVFLPNNSLFEKFSMVAPPPNVTGVLHMGHALNFVLQDILVRYKRMKKHNTLWLFGTDHAGIATQTVFERNLKNIGKSKNDFEREEFVKEIFKLKDKHRGVIVNQIKKLGASYDHSRERFTLDESLCKAVNKVFKDLYSKGLIYRGEYLVNLDPGSGSVVSDEEIEYKEVDGKLYFVKYFIDDSSFIEIATTRPETMFGDTAIAVNPNDERYKSLVGKEVTIPLTTKKIKIIADFHVDSAFGTGALKITPAHDPNDFEISKRHNIPKVNILTQDGKLNENVPLQYQGLSIKDARFKIEIELMEKGFLKGVKKHRQQVGHCYRSGEVIEPYLSTQWFVSMKPLAEKALKALESGELRFYPKKWENTYKYWLSNIKDWCISRQLVWGHRIPAWYNIDTSELIISDTDPSLDEKNVGKRFVQDPDVLDTWFSSWLWPFSSLGWPNITVDFENYYPTKTLITAYDIIFFWVARMVMAGLEFTGQTPFRDVYITPLLRDKQGKKMSKSLGNGIDPLDIIHEYGSDSLRFTLSFLSVQGQDLNIDAKDFMLGAKFANKVFNASKFILLNLENREIFNNLKFNDIDKWLLTSLNSTILGVESSFANYKYNEASKFVYEFFWNDFCDWYIEISKIDLNSENVDIQNMAISKLLFFLKKALLILHPFIPFVTEKIYSEFSEKGDILALNEYPSFDISSNFKEEFESFKVFKTFIVAVRTLKSEFNISSSIEIDVALKFDSDFKYEGYFKANESISKRMINFKNIFYNENCDGMLGLAVVGFEIYADVKLLIDKTKELIRLEKQLEKYKMLKISVSKKLENENFLMNAPKEIIESEKLKFVEFSSLINKINSYIINLKNL</sequence>
<feature type="chain" id="PRO_0000224448" description="Valine--tRNA ligase">
    <location>
        <begin position="1"/>
        <end position="875"/>
    </location>
</feature>
<feature type="coiled-coil region" evidence="1">
    <location>
        <begin position="803"/>
        <end position="837"/>
    </location>
</feature>
<feature type="short sequence motif" description="'HIGH' region">
    <location>
        <begin position="45"/>
        <end position="55"/>
    </location>
</feature>
<feature type="short sequence motif" description="'KMSKS' region">
    <location>
        <begin position="524"/>
        <end position="528"/>
    </location>
</feature>
<feature type="binding site" evidence="1">
    <location>
        <position position="527"/>
    </location>
    <ligand>
        <name>ATP</name>
        <dbReference type="ChEBI" id="CHEBI:30616"/>
    </ligand>
</feature>
<keyword id="KW-0030">Aminoacyl-tRNA synthetase</keyword>
<keyword id="KW-0067">ATP-binding</keyword>
<keyword id="KW-0175">Coiled coil</keyword>
<keyword id="KW-0963">Cytoplasm</keyword>
<keyword id="KW-0436">Ligase</keyword>
<keyword id="KW-0547">Nucleotide-binding</keyword>
<keyword id="KW-0648">Protein biosynthesis</keyword>